<organismHost>
    <name type="scientific">Homo sapiens</name>
    <name type="common">Human</name>
    <dbReference type="NCBI Taxonomy" id="9606"/>
</organismHost>
<dbReference type="EMBL" id="X05259">
    <property type="protein sequence ID" value="CAA28880.1"/>
    <property type="status" value="ALT_SEQ"/>
    <property type="molecule type" value="mRNA"/>
</dbReference>
<dbReference type="EMBL" id="M30776">
    <property type="protein sequence ID" value="AAA47421.1"/>
    <property type="status" value="ALT_SEQ"/>
    <property type="molecule type" value="Genomic_RNA"/>
</dbReference>
<dbReference type="PIR" id="A27505">
    <property type="entry name" value="GNWVR3"/>
</dbReference>
<dbReference type="PIR" id="JQ0087">
    <property type="entry name" value="GNWV77"/>
</dbReference>
<dbReference type="PDB" id="4ADG">
    <property type="method" value="X-ray"/>
    <property type="resolution" value="2.18 A"/>
    <property type="chains" value="A/B/C=583-1018"/>
</dbReference>
<dbReference type="PDB" id="4ADI">
    <property type="method" value="X-ray"/>
    <property type="resolution" value="1.80 A"/>
    <property type="chains" value="A/B/C=583-1018"/>
</dbReference>
<dbReference type="PDB" id="4ADJ">
    <property type="method" value="X-ray"/>
    <property type="resolution" value="1.94 A"/>
    <property type="chains" value="A/B/C=583-1018"/>
</dbReference>
<dbReference type="PDB" id="4B3V">
    <property type="method" value="X-ray"/>
    <property type="resolution" value="1.98 A"/>
    <property type="chains" value="A/B/C=583-1018"/>
</dbReference>
<dbReference type="PDB" id="4HAR">
    <property type="method" value="X-ray"/>
    <property type="resolution" value="2.66 A"/>
    <property type="chains" value="A/B/C/D/E/F=127-277"/>
</dbReference>
<dbReference type="PDB" id="4HBE">
    <property type="method" value="X-ray"/>
    <property type="resolution" value="2.30 A"/>
    <property type="chains" value="A/B=127-277"/>
</dbReference>
<dbReference type="PDB" id="4HBO">
    <property type="method" value="X-ray"/>
    <property type="resolution" value="3.24 A"/>
    <property type="chains" value="A/B/C/D/E=147-277"/>
</dbReference>
<dbReference type="PDB" id="5KHC">
    <property type="method" value="EM"/>
    <property type="resolution" value="11.10 A"/>
    <property type="chains" value="A=583-1018"/>
</dbReference>
<dbReference type="PDBsum" id="4ADG"/>
<dbReference type="PDBsum" id="4ADI"/>
<dbReference type="PDBsum" id="4ADJ"/>
<dbReference type="PDBsum" id="4B3V"/>
<dbReference type="PDBsum" id="4HAR"/>
<dbReference type="PDBsum" id="4HBE"/>
<dbReference type="PDBsum" id="4HBO"/>
<dbReference type="PDBsum" id="5KHC"/>
<dbReference type="EMDB" id="EMD-8248"/>
<dbReference type="SMR" id="P08563"/>
<dbReference type="IntAct" id="P08563">
    <property type="interactions" value="37"/>
</dbReference>
<dbReference type="iPTMnet" id="P08563"/>
<dbReference type="EvolutionaryTrace" id="P08563"/>
<dbReference type="Proteomes" id="UP000007143">
    <property type="component" value="Genome"/>
</dbReference>
<dbReference type="GO" id="GO:0044178">
    <property type="term" value="C:host cell Golgi membrane"/>
    <property type="evidence" value="ECO:0007669"/>
    <property type="project" value="UniProtKB-SubCell"/>
</dbReference>
<dbReference type="GO" id="GO:0033650">
    <property type="term" value="C:host cell mitochondrion"/>
    <property type="evidence" value="ECO:0007669"/>
    <property type="project" value="UniProtKB-SubCell"/>
</dbReference>
<dbReference type="GO" id="GO:0016020">
    <property type="term" value="C:membrane"/>
    <property type="evidence" value="ECO:0007669"/>
    <property type="project" value="UniProtKB-KW"/>
</dbReference>
<dbReference type="GO" id="GO:0039619">
    <property type="term" value="C:T=4 icosahedral viral capsid"/>
    <property type="evidence" value="ECO:0007669"/>
    <property type="project" value="UniProtKB-KW"/>
</dbReference>
<dbReference type="GO" id="GO:0019031">
    <property type="term" value="C:viral envelope"/>
    <property type="evidence" value="ECO:0007669"/>
    <property type="project" value="UniProtKB-KW"/>
</dbReference>
<dbReference type="GO" id="GO:0019013">
    <property type="term" value="C:viral nucleocapsid"/>
    <property type="evidence" value="ECO:0007669"/>
    <property type="project" value="InterPro"/>
</dbReference>
<dbReference type="GO" id="GO:0055036">
    <property type="term" value="C:virion membrane"/>
    <property type="evidence" value="ECO:0007669"/>
    <property type="project" value="UniProtKB-SubCell"/>
</dbReference>
<dbReference type="GO" id="GO:0046872">
    <property type="term" value="F:metal ion binding"/>
    <property type="evidence" value="ECO:0007669"/>
    <property type="project" value="UniProtKB-KW"/>
</dbReference>
<dbReference type="GO" id="GO:0003723">
    <property type="term" value="F:RNA binding"/>
    <property type="evidence" value="ECO:0007669"/>
    <property type="project" value="UniProtKB-KW"/>
</dbReference>
<dbReference type="GO" id="GO:0075512">
    <property type="term" value="P:clathrin-dependent endocytosis of virus by host cell"/>
    <property type="evidence" value="ECO:0007669"/>
    <property type="project" value="UniProtKB-KW"/>
</dbReference>
<dbReference type="GO" id="GO:0039654">
    <property type="term" value="P:fusion of virus membrane with host endosome membrane"/>
    <property type="evidence" value="ECO:0007669"/>
    <property type="project" value="UniProtKB-KW"/>
</dbReference>
<dbReference type="GO" id="GO:0019062">
    <property type="term" value="P:virion attachment to host cell"/>
    <property type="evidence" value="ECO:0007669"/>
    <property type="project" value="UniProtKB-KW"/>
</dbReference>
<dbReference type="Gene3D" id="2.60.98.30">
    <property type="entry name" value="Rubella membrane glycoprotein E1, domain 1"/>
    <property type="match status" value="1"/>
</dbReference>
<dbReference type="Gene3D" id="3.30.67.20">
    <property type="entry name" value="Rubella membrane glycoprotein E1, domain 2"/>
    <property type="match status" value="2"/>
</dbReference>
<dbReference type="Gene3D" id="2.60.40.2650">
    <property type="entry name" value="Rubella membrane glycoprotein E1, domain 3"/>
    <property type="match status" value="1"/>
</dbReference>
<dbReference type="Gene3D" id="3.10.50.50">
    <property type="entry name" value="Rubella virus capsid protein"/>
    <property type="match status" value="1"/>
</dbReference>
<dbReference type="InterPro" id="IPR008819">
    <property type="entry name" value="Rubella_Capsid"/>
</dbReference>
<dbReference type="InterPro" id="IPR043106">
    <property type="entry name" value="Rubella_Capsid_sf"/>
</dbReference>
<dbReference type="InterPro" id="IPR008820">
    <property type="entry name" value="Rubella_E1"/>
</dbReference>
<dbReference type="InterPro" id="IPR042500">
    <property type="entry name" value="Rubella_E1_1"/>
</dbReference>
<dbReference type="InterPro" id="IPR042498">
    <property type="entry name" value="Rubella_E1_2"/>
</dbReference>
<dbReference type="InterPro" id="IPR042499">
    <property type="entry name" value="Rubella_E1_3"/>
</dbReference>
<dbReference type="InterPro" id="IPR008821">
    <property type="entry name" value="Rubella_E2"/>
</dbReference>
<dbReference type="PANTHER" id="PTHR13037">
    <property type="entry name" value="FORMIN"/>
    <property type="match status" value="1"/>
</dbReference>
<dbReference type="PANTHER" id="PTHR13037:SF24">
    <property type="entry name" value="POLYCOMB PROTEIN PCL-RELATED"/>
    <property type="match status" value="1"/>
</dbReference>
<dbReference type="Pfam" id="PF05750">
    <property type="entry name" value="Rubella_Capsid"/>
    <property type="match status" value="1"/>
</dbReference>
<dbReference type="Pfam" id="PF05748">
    <property type="entry name" value="Rubella_E1"/>
    <property type="match status" value="1"/>
</dbReference>
<dbReference type="Pfam" id="PF05749">
    <property type="entry name" value="Rubella_E2"/>
    <property type="match status" value="1"/>
</dbReference>
<reference key="1">
    <citation type="journal article" date="1987" name="Nucleic Acids Res.">
        <title>Nucleotide sequence and in vitro expression of rubella virus 24S subgenomic messenger RNA encoding the structural proteins E1, E2 and C.</title>
        <authorList>
            <person name="Clarke D.M."/>
            <person name="Loo T.W."/>
            <person name="Hui I."/>
            <person name="Chong P."/>
            <person name="Gillam S."/>
        </authorList>
    </citation>
    <scope>NUCLEOTIDE SEQUENCE [MRNA]</scope>
</reference>
<reference key="2">
    <citation type="journal article" date="1988" name="Gene">
        <title>Expression of rubella virus cDNA coding for the structural proteins.</title>
        <authorList>
            <person name="Clarke D.M."/>
            <person name="Loo T.W."/>
            <person name="McDonald H."/>
            <person name="Gillam S."/>
        </authorList>
    </citation>
    <scope>SEQUENCE REVISION</scope>
</reference>
<reference key="3">
    <citation type="journal article" date="1989" name="Gene">
        <title>Nucleotide sequence of the 24S subgenomic messenger RNA of a vaccine strain (HPV77) of rubella virus: comparison with a wild-type strain (M33).</title>
        <authorList>
            <person name="Zheng D."/>
            <person name="Dickens L."/>
            <person name="Liu T.Y."/>
            <person name="Nakhasi H.L."/>
        </authorList>
    </citation>
    <scope>NUCLEOTIDE SEQUENCE [GENOMIC RNA]</scope>
    <source>
        <strain>Isolate HPV77 vaccine</strain>
    </source>
</reference>
<reference key="4">
    <citation type="journal article" date="1988" name="J. Virol.">
        <title>Translocation of rubella virus glycoprotein E1 into the endoplasmic reticulum.</title>
        <authorList>
            <person name="Hobman T.C."/>
            <person name="Shukin R."/>
            <person name="Gillam S."/>
        </authorList>
    </citation>
    <scope>SUBCELLULAR LOCATION (SPIKE GLYCOPROTEIN E2)</scope>
    <scope>DOMAIN (STRUCTURAL POLYPROTEIN)</scope>
</reference>
<reference key="5">
    <citation type="journal article" date="1989" name="Virology">
        <title>In vitro and in vivo expression of rubella virus glycoprotein E2: the signal peptide is contained in the C-terminal region of capsid protein.</title>
        <authorList>
            <person name="Hobman T.C."/>
            <person name="Gillam S."/>
        </authorList>
    </citation>
    <scope>SUBCELLULAR LOCATION (SPIKE GLYCOPROTEIN E2)</scope>
    <scope>DOMAIN (STRUCTURAL POLYPROTEIN)</scope>
</reference>
<reference key="6">
    <citation type="journal article" date="1990" name="J. Virol.">
        <title>The E2 signal sequence of rubella virus remains part of the capsid protein and confers membrane association in vitro.</title>
        <authorList>
            <person name="Suomalainen M."/>
            <person name="Garoff H."/>
            <person name="Baron M.D."/>
        </authorList>
    </citation>
    <scope>DOMAIN (CAPSID PROTEIN)</scope>
    <scope>SUBCELLULAR LOCATION (CAPSID PROTEIN)</scope>
</reference>
<reference key="7">
    <citation type="journal article" date="1991" name="Virology">
        <title>Analysis of rubella virus E1 glycosylation mutants expressed in COS cells.</title>
        <authorList>
            <person name="Hobman T.C."/>
            <person name="Qiu Z."/>
            <person name="Chaye H."/>
            <person name="Gillam S."/>
        </authorList>
    </citation>
    <scope>GLYCOSYLATION (SPIKE GLYCOPROTEIN E1)</scope>
</reference>
<reference key="8">
    <citation type="journal article" date="1993" name="J. Cell Biol.">
        <title>The rubella virus E2 and E1 spike glycoproteins are targeted to the Golgi complex.</title>
        <authorList>
            <person name="Hobman T.C."/>
            <person name="Woodward L."/>
            <person name="Farquhar M.G."/>
        </authorList>
    </citation>
    <scope>SUBCELLULAR LOCATION (SPIKE GLYCOPROTEIN E2)</scope>
    <scope>SUBCELLULAR LOCATION (SPIKE GLYCOPROTEIN E1)</scope>
</reference>
<reference key="9">
    <citation type="journal article" date="1994" name="Virology">
        <title>Mutational analysis of the arginine residues in the E2-E1 junction region on the proteolytic processing of the polyprotein precursor of rubella virus.</title>
        <authorList>
            <person name="Qiu Z."/>
            <person name="McDonald H.L."/>
            <person name="Chen J."/>
            <person name="Hobman T.C."/>
            <person name="Gillam S."/>
        </authorList>
    </citation>
    <scope>PROTEOLYTIC CLEAVAGE (STRUCTURAL POLYPROTEIN)</scope>
</reference>
<reference key="10">
    <citation type="journal article" date="1995" name="Mol. Biol. Cell">
        <title>Targeting of a heterodimeric membrane protein complex to the Golgi: rubella virus E2 glycoprotein contains a transmembrane Golgi retention signal.</title>
        <authorList>
            <person name="Hobman T.C."/>
            <person name="Woodward L."/>
            <person name="Farquhar M.G."/>
        </authorList>
    </citation>
    <scope>SUBCELLULAR LOCATION (SPIKE GLYCOPROTEIN E2)</scope>
</reference>
<reference key="11">
    <citation type="journal article" date="1996" name="Virology">
        <title>Dimerization of rubella virus capsid protein is not required for virus particle formation.</title>
        <authorList>
            <person name="Lee J.Y."/>
            <person name="Hwang D."/>
            <person name="Gillam S."/>
        </authorList>
    </citation>
    <scope>MUTAGENESIS OF CYS-153</scope>
    <scope>SUBUNIT (CAPSID PROTEIN)</scope>
</reference>
<reference key="12">
    <citation type="journal article" date="1997" name="J. Virol.">
        <title>Characterization of an endoplasmic reticulum retention signal in the rubella virus E1 glycoprotein.</title>
        <authorList>
            <person name="Hobman T.C."/>
            <person name="Lemon H.F."/>
            <person name="Jewell K."/>
        </authorList>
    </citation>
    <scope>SUBCELLULAR LOCATION (SPIKE GLYCOPROTEIN E1)</scope>
</reference>
<reference key="13">
    <citation type="journal article" date="1998" name="J. Virol.">
        <title>Effects of mutations in the rubella virus E1 glycoprotein on E1-E2 interaction and membrane fusion activity.</title>
        <authorList>
            <person name="Yang D."/>
            <person name="Hwang D."/>
            <person name="Qiu Z."/>
            <person name="Gillam S."/>
        </authorList>
    </citation>
    <scope>MUTAGENESIS OF CYS-664; GLY-675 AND PRO-686</scope>
    <scope>SUBUNIT (SPIKE GLYCOPROTEIN E1)</scope>
    <scope>SUBUNIT (SPIKE GLYCOPROTEIN E2)</scope>
    <scope>FUNCTION (SPIKE GLYCOPROTEIN E1)</scope>
</reference>
<reference key="14">
    <citation type="journal article" date="1999" name="J. Virol.">
        <title>Mutational analysis, using a full-length rubella virus cDNA clone, of rubella virus E1 transmembrane and cytoplasmic domains required for virus release.</title>
        <authorList>
            <person name="Yao J."/>
            <person name="Gillam S."/>
        </authorList>
    </citation>
    <scope>MUTAGENESIS OF LEU-1046; CYS-1048; CYS-1049; CYS-1052 AND LEU-1053</scope>
    <scope>FUNCTION (SPIKE GLYCOPROTEIN E1)</scope>
</reference>
<reference key="15">
    <citation type="journal article" date="2000" name="J. Virol.">
        <title>Rubella virus capsid associates with host cell protein p32 and localizes to mitochondria.</title>
        <authorList>
            <person name="Beatch M.D."/>
            <person name="Hobman T.C."/>
        </authorList>
    </citation>
    <scope>INTERACTION WITH HUMAN C1QBP (CAPSID PROTEIN)</scope>
    <scope>FUNCTION (CAPSID PROTEIN)</scope>
    <scope>SUBCELLULAR LOCATION (CAPSID PROTEIN)</scope>
</reference>
<reference key="16">
    <citation type="journal article" date="2000" name="J. Virol.">
        <title>A single-amino-acid substitution of a tyrosine residue in the rubella virus E1 cytoplasmic domain blocks virus release.</title>
        <authorList>
            <person name="Yao J."/>
            <person name="Gillam S."/>
        </authorList>
    </citation>
    <scope>MUTAGENESIS OF CYS-1052; LEU-1053; TYR-1054; TYR-1055; LEU-1056; ARG-1057; GLY-1058; ALA-1059; ILE-1060; ALA-1061; PRO-1062 AND ARG-1063</scope>
    <scope>FUNCTION (SPIKE GLYCOPROTEIN E1)</scope>
</reference>
<reference key="17">
    <citation type="journal article" date="2000" name="J. Virol.">
        <title>Mutations in the E1 hydrophobic domain of rubella virus impair virus infectivity but not virus assembly.</title>
        <authorList>
            <person name="Qiu Z."/>
            <person name="Yao J."/>
            <person name="Cao H."/>
            <person name="Gillam S."/>
        </authorList>
    </citation>
    <scope>MUTAGENESIS OF GLY-675 AND PRO-686</scope>
</reference>
<reference key="18">
    <citation type="journal article" date="2000" name="Virology">
        <title>Rubella virus capsid protein induces apoptosis in transfected RK13 cells.</title>
        <authorList>
            <person name="Duncan R."/>
            <person name="Esmaili A."/>
            <person name="Law L.M."/>
            <person name="Bertholet S."/>
            <person name="Hough C."/>
            <person name="Hobman T.C."/>
            <person name="Nakhasi H.L."/>
        </authorList>
    </citation>
    <scope>FUNCTION (CAPSID PROTEIN)</scope>
</reference>
<reference key="19">
    <citation type="journal article" date="2001" name="J. Virol.">
        <title>Rubella virus E2 signal peptide is required for perinuclear localization of capsid protein and virus assembly.</title>
        <authorList>
            <person name="Law L.M."/>
            <person name="Duncan R."/>
            <person name="Esmaili A."/>
            <person name="Nakhasi H.L."/>
            <person name="Hobman T.C."/>
        </authorList>
    </citation>
    <scope>DOMAIN (CAPSID PROTEIN)</scope>
    <scope>SUBCELLULAR LOCATION (CAPSID PROTEIN)</scope>
</reference>
<reference key="20">
    <citation type="journal article" date="2001" name="Virus Res.">
        <title>Effect of site-directed asparagine to isoleucine substitutions at the N-linked E1 glycosylation sites on rubella virus viability.</title>
        <authorList>
            <person name="Ramanujam M."/>
            <person name="Hofmann J."/>
            <person name="Nakhasi H.L."/>
            <person name="Atreya C.D."/>
        </authorList>
    </citation>
    <scope>GLYCOSYLATION AT ASN-658; ASN-759 AND ASN-791</scope>
    <scope>MUTAGENESIS OF ASN-658; ASN-759 AND ASN-791</scope>
</reference>
<reference key="21">
    <citation type="journal article" date="2003" name="J. Virol.">
        <title>Phosphorylation of rubella virus capsid regulates its RNA binding activity and virus replication.</title>
        <authorList>
            <person name="Law L.M."/>
            <person name="Everitt J.C."/>
            <person name="Beatch M.D."/>
            <person name="Holmes C.F."/>
            <person name="Hobman T.C."/>
        </authorList>
    </citation>
    <scope>PHOSPHORYLATION AT SER-46</scope>
    <scope>RNA-BINDING</scope>
</reference>
<reference key="22">
    <citation type="journal article" date="2005" name="J. Virol.">
        <title>Interactions between rubella virus capsid and host protein p32 are important for virus replication.</title>
        <authorList>
            <person name="Beatch M.D."/>
            <person name="Everitt J.C."/>
            <person name="Law L.J."/>
            <person name="Hobman T.C."/>
        </authorList>
    </citation>
    <scope>MUTAGENESIS OF 35-ARG--ARG-43 AND 60-ARG--ARG-68</scope>
    <scope>INTERACTION WITH HUMAN C1QBP (CAPSID PROTEIN)</scope>
    <scope>FUNCTION (CAPSID PROTEIN)</scope>
</reference>
<reference key="23">
    <citation type="journal article" date="2014" name="J. Virol.">
        <title>Short self-interacting N-terminal region of rubella virus capsid protein is essential for cooperative actions of capsid and nonstructural p150 proteins.</title>
        <authorList>
            <person name="Sakata M."/>
            <person name="Otsuki N."/>
            <person name="Okamoto K."/>
            <person name="Anraku M."/>
            <person name="Nagai M."/>
            <person name="Takeda M."/>
            <person name="Mori Y."/>
        </authorList>
    </citation>
    <scope>INTERACTION WITH THE PROTEASE/METHYLTRANSFERASE P150 (CAPSID PROTEIN)</scope>
    <scope>SUBCELLULAR LOCATION (CAPSID PROTEIN)</scope>
    <source>
        <strain>RVi/Japan/Hiroshima/2003</strain>
    </source>
</reference>
<reference key="24">
    <citation type="journal article" date="2013" name="Nature">
        <title>Functional and evolutionary insight from the crystal structure of rubella virus protein E1.</title>
        <authorList>
            <person name="DuBois R.M."/>
            <person name="Vaney M.C."/>
            <person name="Tortorici M.A."/>
            <person name="Kurdi R.A."/>
            <person name="Barba-Spaeth G."/>
            <person name="Krey T."/>
            <person name="Rey F.A."/>
        </authorList>
    </citation>
    <scope>X-RAY CRYSTALLOGRAPHY (1.80 ANGSTROMS) OF 583-1018 IN COMPLEX WITH CALCIUM</scope>
    <scope>GLYCOSYLATION AT ASN-658; ASN-759; THR-1011 AND THR-1012</scope>
    <scope>FUNCTION (SPIKE GLYCOPROTEIN E1)</scope>
</reference>
<reference key="25">
    <citation type="journal article" date="2013" name="Proc. Natl. Acad. Sci. U.S.A.">
        <title>Rubella virus capsid protein structure and its role in virus assembly and infection.</title>
        <authorList>
            <person name="Mangala Prasad V."/>
            <person name="Willows S.D."/>
            <person name="Fokine A."/>
            <person name="Battisti A.J."/>
            <person name="Sun S."/>
            <person name="Plevka P."/>
            <person name="Hobman T.C."/>
            <person name="Rossmann M.G."/>
        </authorList>
    </citation>
    <scope>X-RAY CRYSTALLOGRAPHY (2.30 ANGSTROMS) OF 127-277</scope>
    <scope>SUBUNIT (CAPSID PROTEIN)</scope>
    <scope>FUNCTION (CAPSID PROTEIN)</scope>
</reference>
<reference key="26">
    <citation type="journal article" date="2017" name="PLoS Pathog.">
        <title>Assembly, maturation and three-dimensional helical structure of the teratogenic rubella virus.</title>
        <authorList>
            <person name="Mangala Prasad V."/>
            <person name="Klose T."/>
            <person name="Rossmann M.G."/>
        </authorList>
    </citation>
    <scope>STRUCTURE BY ELECTRON MICROSCOPY (11.10 ANGSTROMS) OF 583-1018</scope>
    <scope>SUBCELLULAR LOCATION (CAPSID PROTEIN)</scope>
    <scope>FUNCTION (CAPSID PROTEIN)</scope>
    <scope>FUNCTION (SPIKE GLYCOPROTEIN E2)</scope>
    <scope>FUNCTION (SPIKE GLYCOPROTEIN E1)</scope>
</reference>
<evidence type="ECO:0000250" key="1"/>
<evidence type="ECO:0000250" key="2">
    <source>
        <dbReference type="UniProtKB" id="P07566"/>
    </source>
</evidence>
<evidence type="ECO:0000255" key="3"/>
<evidence type="ECO:0000255" key="4">
    <source>
        <dbReference type="PROSITE-ProRule" id="PRU00498"/>
    </source>
</evidence>
<evidence type="ECO:0000256" key="5">
    <source>
        <dbReference type="SAM" id="MobiDB-lite"/>
    </source>
</evidence>
<evidence type="ECO:0000269" key="6">
    <source>
    </source>
</evidence>
<evidence type="ECO:0000269" key="7">
    <source>
    </source>
</evidence>
<evidence type="ECO:0000269" key="8">
    <source>
    </source>
</evidence>
<evidence type="ECO:0000269" key="9">
    <source>
    </source>
</evidence>
<evidence type="ECO:0000269" key="10">
    <source>
    </source>
</evidence>
<evidence type="ECO:0000269" key="11">
    <source>
    </source>
</evidence>
<evidence type="ECO:0000269" key="12">
    <source>
    </source>
</evidence>
<evidence type="ECO:0000269" key="13">
    <source>
    </source>
</evidence>
<evidence type="ECO:0000269" key="14">
    <source>
    </source>
</evidence>
<evidence type="ECO:0000269" key="15">
    <source>
    </source>
</evidence>
<evidence type="ECO:0000269" key="16">
    <source>
    </source>
</evidence>
<evidence type="ECO:0000269" key="17">
    <source>
    </source>
</evidence>
<evidence type="ECO:0000269" key="18">
    <source>
    </source>
</evidence>
<evidence type="ECO:0000269" key="19">
    <source>
    </source>
</evidence>
<evidence type="ECO:0000269" key="20">
    <source>
    </source>
</evidence>
<evidence type="ECO:0000269" key="21">
    <source>
    </source>
</evidence>
<evidence type="ECO:0000269" key="22">
    <source>
    </source>
</evidence>
<evidence type="ECO:0000269" key="23">
    <source>
    </source>
</evidence>
<evidence type="ECO:0000269" key="24">
    <source>
    </source>
</evidence>
<evidence type="ECO:0000269" key="25">
    <source>
    </source>
</evidence>
<evidence type="ECO:0000269" key="26">
    <source>
    </source>
</evidence>
<evidence type="ECO:0000269" key="27">
    <source>
    </source>
</evidence>
<evidence type="ECO:0000269" key="28">
    <source>
    </source>
</evidence>
<evidence type="ECO:0000305" key="29"/>
<evidence type="ECO:0000305" key="30">
    <source>
    </source>
</evidence>
<evidence type="ECO:0000305" key="31">
    <source>
    </source>
</evidence>
<evidence type="ECO:0000305" key="32">
    <source>
    </source>
</evidence>
<evidence type="ECO:0000305" key="33">
    <source>
    </source>
</evidence>
<evidence type="ECO:0000305" key="34">
    <source>
    </source>
</evidence>
<evidence type="ECO:0007744" key="35">
    <source>
        <dbReference type="PDB" id="4ADG"/>
    </source>
</evidence>
<evidence type="ECO:0007744" key="36">
    <source>
        <dbReference type="PDB" id="4ADJ"/>
    </source>
</evidence>
<evidence type="ECO:0007744" key="37">
    <source>
        <dbReference type="PDB" id="4B3V"/>
    </source>
</evidence>
<evidence type="ECO:0007829" key="38">
    <source>
        <dbReference type="PDB" id="4ADI"/>
    </source>
</evidence>
<evidence type="ECO:0007829" key="39">
    <source>
        <dbReference type="PDB" id="4HBE"/>
    </source>
</evidence>
<evidence type="ECO:0007829" key="40">
    <source>
        <dbReference type="PDB" id="4HBO"/>
    </source>
</evidence>
<protein>
    <recommendedName>
        <fullName>Structural polyprotein</fullName>
    </recommendedName>
    <alternativeName>
        <fullName>p110</fullName>
    </alternativeName>
    <component>
        <recommendedName>
            <fullName>Capsid protein</fullName>
        </recommendedName>
        <alternativeName>
            <fullName>Coat protein</fullName>
            <shortName>C</shortName>
        </alternativeName>
    </component>
    <component>
        <recommendedName>
            <fullName>Spike glycoprotein E2</fullName>
        </recommendedName>
        <alternativeName>
            <fullName>E2 envelope glycoprotein</fullName>
        </alternativeName>
    </component>
    <component>
        <recommendedName>
            <fullName>Spike glycoprotein E1</fullName>
        </recommendedName>
        <alternativeName>
            <fullName>E1 envelope glycoprotein</fullName>
        </alternativeName>
    </component>
</protein>
<feature type="chain" id="PRO_0000041302" description="Capsid protein">
    <location>
        <begin position="1"/>
        <end position="300"/>
    </location>
</feature>
<feature type="chain" id="PRO_0000041303" description="Spike glycoprotein E2" evidence="11">
    <location>
        <begin position="301"/>
        <end position="582"/>
    </location>
</feature>
<feature type="chain" id="PRO_0000041304" description="Spike glycoprotein E1" evidence="11">
    <location>
        <begin position="583"/>
        <end position="1063"/>
    </location>
</feature>
<feature type="topological domain" description="Extracellular" evidence="3">
    <location>
        <begin position="301"/>
        <end position="534"/>
    </location>
</feature>
<feature type="transmembrane region" description="Helical; Note=Golgi retention signal" evidence="23">
    <location>
        <begin position="535"/>
        <end position="555"/>
    </location>
</feature>
<feature type="topological domain" description="Cytoplasmic" evidence="3">
    <location>
        <begin position="556"/>
        <end position="582"/>
    </location>
</feature>
<feature type="topological domain" description="Extracellular" evidence="3">
    <location>
        <begin position="583"/>
        <end position="1028"/>
    </location>
</feature>
<feature type="transmembrane region" description="Helical; Note=Endoplasmic reticulum retention signal" evidence="27">
    <location>
        <begin position="1029"/>
        <end position="1049"/>
    </location>
</feature>
<feature type="topological domain" description="Cytoplasmic" evidence="3">
    <location>
        <begin position="1050"/>
        <end position="1063"/>
    </location>
</feature>
<feature type="region of interest" description="Disordered" evidence="5">
    <location>
        <begin position="1"/>
        <end position="131"/>
    </location>
</feature>
<feature type="region of interest" description="Human C1QBP/SF2P32-binding" evidence="14">
    <location>
        <begin position="30"/>
        <end position="69"/>
    </location>
</feature>
<feature type="region of interest" description="Functions as E2 signal peptide" evidence="20">
    <location>
        <begin position="279"/>
        <end position="300"/>
    </location>
</feature>
<feature type="region of interest" description="Functions as E1 signal peptide" evidence="21">
    <location>
        <begin position="563"/>
        <end position="582"/>
    </location>
</feature>
<feature type="compositionally biased region" description="Low complexity" evidence="5">
    <location>
        <begin position="18"/>
        <end position="34"/>
    </location>
</feature>
<feature type="compositionally biased region" description="Basic residues" evidence="5">
    <location>
        <begin position="59"/>
        <end position="69"/>
    </location>
</feature>
<feature type="compositionally biased region" description="Basic and acidic residues" evidence="5">
    <location>
        <begin position="70"/>
        <end position="87"/>
    </location>
</feature>
<feature type="compositionally biased region" description="Pro residues" evidence="5">
    <location>
        <begin position="93"/>
        <end position="107"/>
    </location>
</feature>
<feature type="binding site" evidence="35 36 37">
    <location>
        <position position="670"/>
    </location>
    <ligand>
        <name>Ca(2+)</name>
        <dbReference type="ChEBI" id="CHEBI:29108"/>
    </ligand>
</feature>
<feature type="binding site" evidence="35 36 37">
    <location>
        <position position="671"/>
    </location>
    <ligand>
        <name>Ca(2+)</name>
        <dbReference type="ChEBI" id="CHEBI:29108"/>
    </ligand>
</feature>
<feature type="binding site" evidence="36 37">
    <location>
        <position position="718"/>
    </location>
    <ligand>
        <name>Ca(2+)</name>
        <dbReference type="ChEBI" id="CHEBI:29108"/>
    </ligand>
</feature>
<feature type="binding site" evidence="35 36 37">
    <location>
        <position position="719"/>
    </location>
    <ligand>
        <name>Ca(2+)</name>
        <dbReference type="ChEBI" id="CHEBI:29108"/>
    </ligand>
</feature>
<feature type="site" description="Cleavage; by host signal peptidase" evidence="3">
    <location>
        <begin position="300"/>
        <end position="301"/>
    </location>
</feature>
<feature type="site" description="Cleavage; by host signal peptidase" evidence="3">
    <location>
        <begin position="582"/>
        <end position="583"/>
    </location>
</feature>
<feature type="modified residue" description="Phosphoserine; by host" evidence="13">
    <location>
        <position position="46"/>
    </location>
</feature>
<feature type="glycosylation site" description="N-linked (GlcNAc...) asparagine; by host" evidence="4">
    <location>
        <position position="353"/>
    </location>
</feature>
<feature type="glycosylation site" description="N-linked (GlcNAc...) asparagine; by host" evidence="4">
    <location>
        <position position="371"/>
    </location>
</feature>
<feature type="glycosylation site" description="N-linked (GlcNAc...) asparagine; by host" evidence="4">
    <location>
        <position position="410"/>
    </location>
</feature>
<feature type="glycosylation site" description="N-linked (GlcNAc...) asparagine; by host" evidence="4">
    <location>
        <position position="429"/>
    </location>
</feature>
<feature type="glycosylation site" description="N-linked (GlcNAc...) asparagine; by host" evidence="12 17">
    <location>
        <position position="658"/>
    </location>
</feature>
<feature type="glycosylation site" description="N-linked (GlcNAc...) asparagine; by host" evidence="12 15 17">
    <location>
        <position position="759"/>
    </location>
</feature>
<feature type="glycosylation site" description="N-linked (GlcNAc...) asparagine; by host" evidence="12 15">
    <location>
        <position position="791"/>
    </location>
</feature>
<feature type="glycosylation site" description="O-linked (GalNAc...) threonine; by host" evidence="17">
    <location>
        <position position="1011"/>
    </location>
</feature>
<feature type="glycosylation site" description="O-linked (GalNAc...) threonine; by host" evidence="17">
    <location>
        <position position="1012"/>
    </location>
</feature>
<feature type="disulfide bond" evidence="18">
    <location>
        <begin position="153"/>
        <end position="197"/>
    </location>
</feature>
<feature type="disulfide bond" evidence="2">
    <location>
        <begin position="590"/>
        <end position="595"/>
    </location>
</feature>
<feature type="disulfide bond" evidence="2">
    <location>
        <begin position="619"/>
        <end position="824"/>
    </location>
</feature>
<feature type="disulfide bond" evidence="2">
    <location>
        <begin position="641"/>
        <end position="653"/>
    </location>
</feature>
<feature type="disulfide bond" evidence="2">
    <location>
        <begin position="699"/>
        <end position="712"/>
    </location>
</feature>
<feature type="disulfide bond" evidence="2">
    <location>
        <begin position="758"/>
        <end position="767"/>
    </location>
</feature>
<feature type="disulfide bond" evidence="2">
    <location>
        <begin position="807"/>
        <end position="817"/>
    </location>
</feature>
<feature type="disulfide bond" evidence="2">
    <location>
        <begin position="931"/>
        <end position="934"/>
    </location>
</feature>
<feature type="disulfide bond" evidence="2">
    <location>
        <begin position="950"/>
        <end position="983"/>
    </location>
</feature>
<feature type="sequence variant" description="In strain: Isolate HPV77 vaccine.">
    <original>H</original>
    <variation>R</variation>
    <location>
        <position position="272"/>
    </location>
</feature>
<feature type="sequence variant" description="In strain: Isolate HPV77 vaccine.">
    <original>S</original>
    <variation>Y</variation>
    <location>
        <position position="411"/>
    </location>
</feature>
<feature type="sequence variant" description="In strain: Isolate HPV77 vaccine.">
    <original>T</original>
    <variation>I</variation>
    <location>
        <position position="412"/>
    </location>
</feature>
<feature type="sequence variant" description="In strain: Isolate HPV77 vaccine.">
    <original>T</original>
    <variation>A</variation>
    <location>
        <position position="413"/>
    </location>
</feature>
<feature type="sequence variant" description="In strain: Isolate HPV77 vaccine.">
    <original>R</original>
    <variation>G</variation>
    <location>
        <position position="609"/>
    </location>
</feature>
<feature type="mutagenesis site" description="Complete loss of human C1QBP/SF2P32-binding. 90% loss of virus production from infected cell." evidence="14">
    <original>RRPRPPRQR</original>
    <variation>AAPAPPAQA</variation>
    <location>
        <begin position="35"/>
        <end position="43"/>
    </location>
</feature>
<feature type="mutagenesis site" description="Complete loss of human C1QBP/SF2P32-binding. 90% loss of virus production from infected cell." evidence="14">
    <original>RRRRGNRGR</original>
    <variation>AAAAGNAGA</variation>
    <location>
        <begin position="60"/>
        <end position="68"/>
    </location>
</feature>
<feature type="mutagenesis site" description="Complete loss of Capsid dimerization. No effect on particle budding." evidence="26">
    <original>C</original>
    <variation>S</variation>
    <location>
        <position position="153"/>
    </location>
</feature>
<feature type="mutagenesis site" description="Complete loss of infectivity." evidence="12">
    <original>N</original>
    <variation>I</variation>
    <location>
        <position position="658"/>
    </location>
</feature>
<feature type="mutagenesis site" description="Prevents E1-E2 heterodimer formation, and subsequent transport of to the plasma membrane. Complete loss of fusion activity in vitro." evidence="28">
    <original>C</original>
    <variation>S</variation>
    <location>
        <position position="664"/>
    </location>
</feature>
<feature type="mutagenesis site" description="Complete loss of fusion activity in vitro. 90% loss of infectivity in vivo. No effect on virus assembly." evidence="9 28">
    <original>G</original>
    <variation>D</variation>
    <location>
        <position position="675"/>
    </location>
</feature>
<feature type="mutagenesis site" description="99.9% loss of infectivity. No effect on virus assembly. No effect on fusion activity in vitro." evidence="9 28">
    <original>P</original>
    <variation>G</variation>
    <location>
        <position position="686"/>
    </location>
</feature>
<feature type="mutagenesis site" description="No effect on infectivity." evidence="12">
    <original>N</original>
    <variation>I</variation>
    <location>
        <position position="759"/>
    </location>
</feature>
<feature type="mutagenesis site" description="Complete loss of infectivity." evidence="12">
    <original>N</original>
    <variation>I</variation>
    <location>
        <position position="791"/>
    </location>
</feature>
<feature type="mutagenesis site" description="No effect on virus production from infected cell." evidence="6">
    <original>L</original>
    <variation>A</variation>
    <location>
        <position position="1046"/>
    </location>
</feature>
<feature type="mutagenesis site" description="No effect on virus production from infected cell." evidence="6">
    <original>C</original>
    <variation>A</variation>
    <location>
        <position position="1048"/>
    </location>
</feature>
<feature type="mutagenesis site" description="No effect on virus production from infected cell." evidence="6">
    <original>C</original>
    <variation>A</variation>
    <location>
        <position position="1049"/>
    </location>
</feature>
<feature type="mutagenesis site" description="No effect on virus production from infected cell." evidence="6 7">
    <original>C</original>
    <variation>A</variation>
    <location>
        <position position="1052"/>
    </location>
</feature>
<feature type="mutagenesis site" description="90% loss of virus production from infected cell." evidence="6 7">
    <original>L</original>
    <variation>A</variation>
    <location>
        <position position="1053"/>
    </location>
</feature>
<feature type="mutagenesis site" description="Complete loss of virus production from infected cell." evidence="7">
    <original>Y</original>
    <variation>A</variation>
    <location>
        <position position="1054"/>
    </location>
</feature>
<feature type="mutagenesis site" description="Complete loss of virus production from infected cell." evidence="7">
    <original>Y</original>
    <variation>S</variation>
    <location>
        <position position="1055"/>
    </location>
</feature>
<feature type="mutagenesis site" description="90% loss of virus production from infected cell." evidence="7">
    <original>L</original>
    <variation>A</variation>
    <location>
        <position position="1056"/>
    </location>
</feature>
<feature type="mutagenesis site" description="98% loss of virus production from infected cell." evidence="7">
    <original>R</original>
    <variation>S</variation>
    <location>
        <position position="1057"/>
    </location>
</feature>
<feature type="mutagenesis site" description="98% loss of virus production from infected cell." evidence="7">
    <original>G</original>
    <variation>C</variation>
    <location>
        <position position="1058"/>
    </location>
</feature>
<feature type="mutagenesis site" description="90% loss of virus production from infected cell." evidence="7">
    <original>A</original>
    <variation>S</variation>
    <location>
        <position position="1059"/>
    </location>
</feature>
<feature type="mutagenesis site" description="No effect on virus production from infected cell." evidence="7">
    <original>I</original>
    <variation>V</variation>
    <location>
        <position position="1060"/>
    </location>
</feature>
<feature type="mutagenesis site" description="90% loss of virus production from infected cell." evidence="7">
    <original>A</original>
    <variation>S</variation>
    <location>
        <position position="1061"/>
    </location>
</feature>
<feature type="mutagenesis site" description="90% loss of virus production from infected cell." evidence="7">
    <original>P</original>
    <variation>S</variation>
    <location>
        <position position="1062"/>
    </location>
</feature>
<feature type="mutagenesis site" description="98% loss of virus production from infected cell." evidence="7">
    <original>R</original>
    <variation>S</variation>
    <location>
        <position position="1063"/>
    </location>
</feature>
<feature type="sequence conflict" description="In Ref. 1; CAA28880." evidence="29" ref="1">
    <original>QRDSSTSGDDSGRDSGGPRRRRGNRGRG</original>
    <variation>HARLQHLPEMTPAVTPEGPAPPRTGAW</variation>
    <location>
        <begin position="42"/>
        <end position="69"/>
    </location>
</feature>
<feature type="sequence conflict" description="In Ref. 1; CAA28880." evidence="29" ref="1">
    <original>T</original>
    <variation>I</variation>
    <location>
        <position position="175"/>
    </location>
</feature>
<feature type="sequence conflict" description="In Ref. 1; CAA28880." evidence="29" ref="1">
    <original>RHGADTRCGRLICGLSTTAQYPPTRFG</original>
    <variation>PTALTPGAVGDLRAVHHRPVPAYPVC</variation>
    <location>
        <begin position="445"/>
        <end position="471"/>
    </location>
</feature>
<feature type="sequence conflict" description="In Ref. 1; CAA28880." evidence="29" ref="1">
    <original>V</original>
    <variation>I</variation>
    <location>
        <position position="485"/>
    </location>
</feature>
<feature type="sequence conflict" description="In Ref. 1; CAA28880." evidence="29" ref="1">
    <original>RGAAAALTAVVLQGYN</original>
    <variation>PAPPPPSPQSSCRGTT</variation>
    <location>
        <begin position="562"/>
        <end position="577"/>
    </location>
</feature>
<feature type="sequence conflict" description="In Ref. 1; CAA28880." evidence="29" ref="1">
    <original>RV</original>
    <variation>GH</variation>
    <location>
        <begin position="993"/>
        <end position="994"/>
    </location>
</feature>
<feature type="sequence conflict" description="In Ref. 1; CAA28880." evidence="29" ref="1">
    <location>
        <begin position="995"/>
        <end position="1063"/>
    </location>
</feature>
<feature type="strand" evidence="39">
    <location>
        <begin position="151"/>
        <end position="160"/>
    </location>
</feature>
<feature type="strand" evidence="40">
    <location>
        <begin position="162"/>
        <end position="164"/>
    </location>
</feature>
<feature type="strand" evidence="39">
    <location>
        <begin position="167"/>
        <end position="176"/>
    </location>
</feature>
<feature type="helix" evidence="39">
    <location>
        <begin position="190"/>
        <end position="193"/>
    </location>
</feature>
<feature type="helix" evidence="39">
    <location>
        <begin position="203"/>
        <end position="209"/>
    </location>
</feature>
<feature type="strand" evidence="39">
    <location>
        <begin position="216"/>
        <end position="221"/>
    </location>
</feature>
<feature type="strand" evidence="39">
    <location>
        <begin position="227"/>
        <end position="234"/>
    </location>
</feature>
<feature type="strand" evidence="39">
    <location>
        <begin position="237"/>
        <end position="244"/>
    </location>
</feature>
<feature type="strand" evidence="38">
    <location>
        <begin position="585"/>
        <end position="589"/>
    </location>
</feature>
<feature type="strand" evidence="38">
    <location>
        <begin position="599"/>
        <end position="601"/>
    </location>
</feature>
<feature type="strand" evidence="38">
    <location>
        <begin position="603"/>
        <end position="621"/>
    </location>
</feature>
<feature type="strand" evidence="38">
    <location>
        <begin position="625"/>
        <end position="634"/>
    </location>
</feature>
<feature type="turn" evidence="38">
    <location>
        <begin position="641"/>
        <end position="647"/>
    </location>
</feature>
<feature type="helix" evidence="38">
    <location>
        <begin position="650"/>
        <end position="657"/>
    </location>
</feature>
<feature type="strand" evidence="38">
    <location>
        <begin position="659"/>
        <end position="670"/>
    </location>
</feature>
<feature type="strand" evidence="38">
    <location>
        <begin position="672"/>
        <end position="674"/>
    </location>
</feature>
<feature type="strand" evidence="38">
    <location>
        <begin position="676"/>
        <end position="678"/>
    </location>
</feature>
<feature type="helix" evidence="38">
    <location>
        <begin position="681"/>
        <end position="683"/>
    </location>
</feature>
<feature type="helix" evidence="38">
    <location>
        <begin position="689"/>
        <end position="694"/>
    </location>
</feature>
<feature type="strand" evidence="38">
    <location>
        <begin position="698"/>
        <end position="703"/>
    </location>
</feature>
<feature type="strand" evidence="38">
    <location>
        <begin position="716"/>
        <end position="718"/>
    </location>
</feature>
<feature type="strand" evidence="38">
    <location>
        <begin position="721"/>
        <end position="729"/>
    </location>
</feature>
<feature type="helix" evidence="38">
    <location>
        <begin position="733"/>
        <end position="735"/>
    </location>
</feature>
<feature type="strand" evidence="38">
    <location>
        <begin position="737"/>
        <end position="753"/>
    </location>
</feature>
<feature type="strand" evidence="38">
    <location>
        <begin position="756"/>
        <end position="760"/>
    </location>
</feature>
<feature type="strand" evidence="38">
    <location>
        <begin position="766"/>
        <end position="768"/>
    </location>
</feature>
<feature type="strand" evidence="38">
    <location>
        <begin position="770"/>
        <end position="777"/>
    </location>
</feature>
<feature type="strand" evidence="38">
    <location>
        <begin position="785"/>
        <end position="790"/>
    </location>
</feature>
<feature type="strand" evidence="38">
    <location>
        <begin position="797"/>
        <end position="804"/>
    </location>
</feature>
<feature type="turn" evidence="38">
    <location>
        <begin position="807"/>
        <end position="813"/>
    </location>
</feature>
<feature type="helix" evidence="38">
    <location>
        <begin position="815"/>
        <end position="817"/>
    </location>
</feature>
<feature type="strand" evidence="38">
    <location>
        <begin position="818"/>
        <end position="821"/>
    </location>
</feature>
<feature type="strand" evidence="38">
    <location>
        <begin position="824"/>
        <end position="826"/>
    </location>
</feature>
<feature type="strand" evidence="38">
    <location>
        <begin position="836"/>
        <end position="839"/>
    </location>
</feature>
<feature type="helix" evidence="38">
    <location>
        <begin position="845"/>
        <end position="848"/>
    </location>
</feature>
<feature type="strand" evidence="38">
    <location>
        <begin position="855"/>
        <end position="862"/>
    </location>
</feature>
<feature type="strand" evidence="38">
    <location>
        <begin position="869"/>
        <end position="875"/>
    </location>
</feature>
<feature type="helix" evidence="38">
    <location>
        <begin position="878"/>
        <end position="880"/>
    </location>
</feature>
<feature type="strand" evidence="38">
    <location>
        <begin position="881"/>
        <end position="883"/>
    </location>
</feature>
<feature type="helix" evidence="38">
    <location>
        <begin position="885"/>
        <end position="892"/>
    </location>
</feature>
<feature type="strand" evidence="38">
    <location>
        <begin position="894"/>
        <end position="896"/>
    </location>
</feature>
<feature type="strand" evidence="38">
    <location>
        <begin position="904"/>
        <end position="910"/>
    </location>
</feature>
<feature type="strand" evidence="38">
    <location>
        <begin position="924"/>
        <end position="936"/>
    </location>
</feature>
<feature type="strand" evidence="38">
    <location>
        <begin position="938"/>
        <end position="944"/>
    </location>
</feature>
<feature type="strand" evidence="38">
    <location>
        <begin position="946"/>
        <end position="948"/>
    </location>
</feature>
<feature type="strand" evidence="38">
    <location>
        <begin position="950"/>
        <end position="954"/>
    </location>
</feature>
<feature type="strand" evidence="38">
    <location>
        <begin position="957"/>
        <end position="962"/>
    </location>
</feature>
<feature type="strand" evidence="38">
    <location>
        <begin position="964"/>
        <end position="971"/>
    </location>
</feature>
<feature type="strand" evidence="38">
    <location>
        <begin position="980"/>
        <end position="989"/>
    </location>
</feature>
<feature type="strand" evidence="38">
    <location>
        <begin position="991"/>
        <end position="995"/>
    </location>
</feature>
<feature type="helix" evidence="38">
    <location>
        <begin position="997"/>
        <end position="1001"/>
    </location>
</feature>
<feature type="turn" evidence="38">
    <location>
        <begin position="1002"/>
        <end position="1004"/>
    </location>
</feature>
<feature type="strand" evidence="38">
    <location>
        <begin position="1005"/>
        <end position="1008"/>
    </location>
</feature>
<feature type="strand" evidence="38">
    <location>
        <begin position="1010"/>
        <end position="1014"/>
    </location>
</feature>
<keyword id="KW-0002">3D-structure</keyword>
<keyword id="KW-0106">Calcium</keyword>
<keyword id="KW-0167">Capsid protein</keyword>
<keyword id="KW-1165">Clathrin-mediated endocytosis of virus by host</keyword>
<keyword id="KW-1015">Disulfide bond</keyword>
<keyword id="KW-1170">Fusion of virus membrane with host endosomal membrane</keyword>
<keyword id="KW-1168">Fusion of virus membrane with host membrane</keyword>
<keyword id="KW-0325">Glycoprotein</keyword>
<keyword id="KW-1035">Host cytoplasm</keyword>
<keyword id="KW-1040">Host Golgi apparatus</keyword>
<keyword id="KW-1043">Host membrane</keyword>
<keyword id="KW-1045">Host mitochondrion</keyword>
<keyword id="KW-0945">Host-virus interaction</keyword>
<keyword id="KW-0449">Lipoprotein</keyword>
<keyword id="KW-0472">Membrane</keyword>
<keyword id="KW-0479">Metal-binding</keyword>
<keyword id="KW-0564">Palmitate</keyword>
<keyword id="KW-0597">Phosphoprotein</keyword>
<keyword id="KW-0694">RNA-binding</keyword>
<keyword id="KW-1144">T=4 icosahedral capsid protein</keyword>
<keyword id="KW-0812">Transmembrane</keyword>
<keyword id="KW-1133">Transmembrane helix</keyword>
<keyword id="KW-1161">Viral attachment to host cell</keyword>
<keyword id="KW-0261">Viral envelope protein</keyword>
<keyword id="KW-1162">Viral penetration into host cytoplasm</keyword>
<keyword id="KW-0946">Virion</keyword>
<keyword id="KW-1164">Virus endocytosis by host</keyword>
<keyword id="KW-1160">Virus entry into host cell</keyword>
<accession>P08563</accession>
<accession>P21480</accession>
<accession>Q86373</accession>
<accession>Q86374</accession>
<accession>Q86375</accession>
<name>POLS_RUBVM</name>
<comment type="function">
    <molecule>Capsid protein</molecule>
    <text evidence="8 10 14 18 22">Capsid protein interacts with genomic RNA and assembles into icosahedric core particles 65-70 nm in diameter (PubMed:28575072). The resulting nucleocapsid eventually associates with the cytoplasmic domain of E2 at the cell membrane, leading to budding and formation of mature virions from host Golgi membranes (PubMed:28575072). Phosphorylation negatively regulates RNA-binding activity, possibly delaying virion assembly during the viral replication phase. Capsid protein dimerizes and becomes disulfide-linked in the virion (PubMed:24282305). Modulates genomic RNA replication. Modulates subgenomic RNA synthesis by interacting with human C1QBP/SF2P32 (PubMed:10823864). Induces both perinuclear clustering of mitochondria and the formation of electron-dense intermitochondrial plaques, both hallmarks of rubella virus infected cells (PubMed:16051872). Induces apoptosis when expressed in transfected cells (PubMed:11017784).</text>
</comment>
<comment type="function">
    <molecule>Spike glycoprotein E2</molecule>
    <text evidence="22">Responsible for viral attachment to target host cell, by binding to the cell receptor. Its transport to the plasma membrane depends on interaction with E1 protein. The surface glycoproteins display an irregular helical organization and a pseudo-tetrameric inner nucleocapsid arrangement (PubMed:28575072).</text>
</comment>
<comment type="function">
    <molecule>Spike glycoprotein E1</molecule>
    <text evidence="2 6 7 17 22 28">Class II viral fusion protein (PubMed:23292515). Fusion activity is inactive as long as E1 is bound to E2 in mature virion. After virus attachment to target cell and clathrin-mediated endocytosis, acidification of the endosome would induce dissociation of E1/E2 heterodimer and concomitant trimerization of the E1 subunits (By similarity). This E1 homotrimer is fusion active, and promotes release of viral nucleocapsid in cytoplasm after endosome and viral membrane fusion (PubMed:9765418). The cytoplasmic tail of spike glycoprotein E1 modulates virus release (PubMed:10233921, PubMed:10708417). The surface glycoproteins display an irregular helical organization and a pseudo-tetrameric inner nucleocapsid arrangement (PubMed:28575072).</text>
</comment>
<comment type="subunit">
    <molecule>Capsid protein</molecule>
    <text evidence="8 19 26">Homodimer; further assembles into homooligomer (PubMed:24282305, PubMed:8614992). Interacts with human C1QBP (PubMed:10823864, PubMed:16051872). Interacts (via N-terminus) with protease/methyltransferase p150 (PubMed:25056903).</text>
</comment>
<comment type="subunit">
    <molecule>Spike glycoprotein E1</molecule>
    <text evidence="28">Heterodimer with spike glycoprotein E2 (PubMed:9765418).</text>
</comment>
<comment type="subunit">
    <molecule>Spike glycoprotein E2</molecule>
    <text evidence="28">Heterodimer with spike glycoprotein E1 (PubMed:9765418).</text>
</comment>
<comment type="interaction">
    <interactant intactId="EBI-11478341">
        <id>PRO_0000041302</id>
    </interactant>
    <interactant intactId="EBI-347528">
        <id>Q07021</id>
        <label>C1QBP</label>
    </interactant>
    <organismsDiffer>true</organismsDiffer>
    <experiments>3</experiments>
</comment>
<comment type="interaction">
    <interactant intactId="EBI-11478341">
        <id>PRO_0000041302</id>
    </interactant>
    <interactant intactId="EBI-2321769">
        <id>Q9Y6H1</id>
        <label>CHCHD2</label>
    </interactant>
    <organismsDiffer>true</organismsDiffer>
    <experiments>3</experiments>
</comment>
<comment type="interaction">
    <interactant intactId="EBI-11477912">
        <id>PRO_0000041303</id>
    </interactant>
    <interactant intactId="EBI-1050500">
        <id>P57735</id>
        <label>RAB25</label>
    </interactant>
    <organismsDiffer>true</organismsDiffer>
    <experiments>2</experiments>
</comment>
<comment type="interaction">
    <interactant intactId="EBI-11477759">
        <id>PRO_0000041304</id>
    </interactant>
    <interactant intactId="EBI-11477864">
        <id>P46091</id>
        <label>CMKLR2</label>
    </interactant>
    <organismsDiffer>true</organismsDiffer>
    <experiments>2</experiments>
</comment>
<comment type="interaction">
    <interactant intactId="EBI-11477759">
        <id>PRO_0000041304</id>
    </interactant>
    <interactant intactId="EBI-10262251">
        <id>Q8IWU4</id>
        <label>SLC30A8</label>
    </interactant>
    <organismsDiffer>true</organismsDiffer>
    <experiments>2</experiments>
</comment>
<comment type="subcellular location">
    <molecule>Capsid protein</molecule>
    <subcellularLocation>
        <location evidence="22">Virion</location>
    </subcellularLocation>
    <subcellularLocation>
        <location evidence="19">Host cytoplasm</location>
    </subcellularLocation>
    <subcellularLocation>
        <location evidence="8">Host mitochondrion</location>
    </subcellularLocation>
    <text evidence="11 16">The capsid protein is concentrated around Golgi region (PubMed:11160697). In the virion, it is probably associated to the viral membrane (PubMed:2214022).</text>
</comment>
<comment type="subcellular location">
    <molecule>Spike glycoprotein E2</molecule>
    <subcellularLocation>
        <location>Virion membrane</location>
        <topology evidence="29">Single-pass type I membrane protein</topology>
    </subcellularLocation>
    <subcellularLocation>
        <location>Host Golgi apparatus membrane</location>
        <topology evidence="23 25">Single-pass type I membrane protein</topology>
    </subcellularLocation>
    <text evidence="30 31 33">E1 and E2 form heterodimer in the endoplasmic reticulum before they are transported to and retained in the Golgi complex, where virus assembly occurs. E1 possesses an endoplasmic reticulum retention signal, and unassembled E2 and E1 subunits are retained in the endoplasmic reticulum. Presumably, assembly of E2 and E1 would mask the signal, thereby allowing transport of the heterodimer to the Golgi complex.</text>
</comment>
<comment type="subcellular location">
    <molecule>Spike glycoprotein E1</molecule>
    <subcellularLocation>
        <location>Virion membrane</location>
        <topology evidence="29">Single-pass type I membrane protein</topology>
    </subcellularLocation>
    <subcellularLocation>
        <location>Host Golgi apparatus membrane</location>
        <topology evidence="25">Single-pass type I membrane protein</topology>
    </subcellularLocation>
    <text evidence="31 32 33 34">E1 and E2 form heterodimer in the endoplasmic reticulum before they are transported to and retained in the Golgi complex, where virus assembly occurs (Probable). E1 possesses an endoplasmic reticulum retention signal, and unassembled E2 and E1 subunits are retained in the endoplasmic reticulum (Probable). Presumably, assembly of E2 and E1 would mask the signal, thereby allowing transport of the heterodimer to the Golgi complex (Probable).</text>
</comment>
<comment type="domain">
    <text evidence="20 21">Structural polyprotein: Contains two internal signal peptides that are necessary for directing translocation of the glycoproteins into the lumen of the endoplasmic reticulum.</text>
</comment>
<comment type="domain">
    <molecule>Capsid protein</molecule>
    <text evidence="11 16">The capsid protein is probably attached to the viral membrane through the E2 signal peptide (PubMed:2214022). This domain is also required for the localization of the capsid protein to the juxtanuclear region and subsequent virus assembly at the Golgi complex (PubMed:11160697).</text>
</comment>
<comment type="PTM">
    <text evidence="24">Structural polyprotein: Specific enzymatic cleavages in vivo yield mature proteins. Two signal peptidase-mediated cleavages within the polyprotein produce the structural proteins capsid, E2, and E1. The E2 signal peptide remains attached to the C-terminus of the capsid protein after cleavage by the signal peptidase. Another signal peptide at E2 C-terminus directs E1 to the ER, with a similar mechanism.</text>
</comment>
<comment type="PTM">
    <molecule>Spike glycoprotein E1</molecule>
    <text evidence="12 15 17">Contains three N-linked oligosaccharides.</text>
</comment>
<comment type="PTM">
    <text evidence="1 13">Capsid is phosphorylated on Ser-46 by host (PubMed:12525610). This phosphorylation negatively regulates capsid protein RNA-binding activity (PubMed:12525610). Dephosphorylated by human PP1A (By similarity).</text>
</comment>
<comment type="miscellaneous">
    <text evidence="29">Structural polyprotein: Translated from a subgenomic RNA synthesized during togaviruses replication.</text>
</comment>
<comment type="sequence caution" evidence="29">
    <conflict type="frameshift">
        <sequence resource="EMBL-CDS" id="CAA28880"/>
    </conflict>
</comment>
<organism>
    <name type="scientific">Rubella virus (strain M33)</name>
    <name type="common">RUBV</name>
    <dbReference type="NCBI Taxonomy" id="11043"/>
    <lineage>
        <taxon>Viruses</taxon>
        <taxon>Riboviria</taxon>
        <taxon>Orthornavirae</taxon>
        <taxon>Kitrinoviricota</taxon>
        <taxon>Alsuviricetes</taxon>
        <taxon>Hepelivirales</taxon>
        <taxon>Matonaviridae</taxon>
        <taxon>Rubivirus</taxon>
        <taxon>Rubivirus rubellae</taxon>
    </lineage>
</organism>
<proteinExistence type="evidence at protein level"/>
<sequence>MASTTPITMEDLQKALEAQSRALRAGLAAGASQSRRPRPPRQRDSSTSGDDSGRDSGGPRRRRGNRGRGQRKDWSRAPPPPEERQESRSQTPAPKPSRAPPQQPQPPRMQTGRGGSAPRPELGPPTNPFQAAVARGLRPPLHDPDTEAPTEACVTSWLWSEGEGAVFYRVDLHFTNLGTPPLDEDGRWDPALMYNPCGPEPPAHVVRAYNQPAGDVRGVWGKGERTYAEQDFRVGGTRWHRLLRMPVRGLDGDTAPLPPHTTERIETRSARHPWRIRFGAPQAFLAGLLLAAVAVGTARAGLQPRADMAAPPMPPQPPRAHGQHYGHHHHQLPFLGHDGHHGGTLRVGQHHRNASDVLPGHWLQGGWGCYNLSDWHQGTHVCHTKHMDFWCVEHDRPPPATPTSLTTAANSTTAATPATAPPPCHAGLNDSCGGFLSGCGPMRLRHGADTRCGRLICGLSTTAQYPPTRFGCAMRWGLPPWELVVLTARPEDGWTCRGVPAHPGTRCPELVSPMGRATCSPASALWLATANALSLDHAFAAFVLLVPWVLIFMVCRRACRRRGAAAALTAVVLQGYNPPAYGEEAFTYLCTAPGCATQTPVPVRLAGVRFESKIVDGGCFAPWDLEATGACICEIPTDVSCEGLGAWVPTAPCARIWNGTQRACTFWAVNAYSSGGYAQLASYFNPGGSYYKQYHPTACEVEPAFGHSDAACWGFPTDTVMSVFALASYVQHPHKTVRVKFHTETRTVWQLSVAGVSCNVTTEHPFCNTPHGQLEVQVPPDPGDLVEYIMNYTGNQQSRWGLGSPNCHGPDWASPVCQRHSPDCSRLVGATPERPRLRLVDADDPLLRTAPGPGEVWVTPVIGSQARKCGLHIRAGPYGHATVEMPEWIHAHTTSDPWHPPGPLGLKFKTVRPVALPRALAPPRNVRVTGCYQCGTPALVEGLAPGGGNCHLTVNGEDVGAFPPGKFVTAALLNTPPPYQVSCGGESDRASARVIDPAAQSFTGVVYGTHTTAVSETRQTWAEWAAAHWWQLTLGAICALLLAGLLACCAKCLYYLRGAIAPR</sequence>